<protein>
    <recommendedName>
        <fullName evidence="1">Glucose-1-phosphate adenylyltransferase</fullName>
        <ecNumber evidence="1">2.7.7.27</ecNumber>
    </recommendedName>
    <alternativeName>
        <fullName evidence="1">ADP-glucose pyrophosphorylase</fullName>
        <shortName evidence="1">ADPGlc PPase</shortName>
    </alternativeName>
    <alternativeName>
        <fullName evidence="1">ADP-glucose synthase</fullName>
    </alternativeName>
</protein>
<evidence type="ECO:0000255" key="1">
    <source>
        <dbReference type="HAMAP-Rule" id="MF_00624"/>
    </source>
</evidence>
<keyword id="KW-0067">ATP-binding</keyword>
<keyword id="KW-0119">Carbohydrate metabolism</keyword>
<keyword id="KW-0320">Glycogen biosynthesis</keyword>
<keyword id="KW-0321">Glycogen metabolism</keyword>
<keyword id="KW-0547">Nucleotide-binding</keyword>
<keyword id="KW-0548">Nucleotidyltransferase</keyword>
<keyword id="KW-0808">Transferase</keyword>
<comment type="function">
    <text evidence="1">Involved in the biosynthesis of ADP-glucose, a building block required for the elongation reactions to produce glycogen. Catalyzes the reaction between ATP and alpha-D-glucose 1-phosphate (G1P) to produce pyrophosphate and ADP-Glc.</text>
</comment>
<comment type="catalytic activity">
    <reaction evidence="1">
        <text>alpha-D-glucose 1-phosphate + ATP + H(+) = ADP-alpha-D-glucose + diphosphate</text>
        <dbReference type="Rhea" id="RHEA:12120"/>
        <dbReference type="ChEBI" id="CHEBI:15378"/>
        <dbReference type="ChEBI" id="CHEBI:30616"/>
        <dbReference type="ChEBI" id="CHEBI:33019"/>
        <dbReference type="ChEBI" id="CHEBI:57498"/>
        <dbReference type="ChEBI" id="CHEBI:58601"/>
        <dbReference type="EC" id="2.7.7.27"/>
    </reaction>
</comment>
<comment type="pathway">
    <text evidence="1">Glycan biosynthesis; glycogen biosynthesis.</text>
</comment>
<comment type="subunit">
    <text evidence="1">Homotetramer.</text>
</comment>
<comment type="similarity">
    <text evidence="1">Belongs to the bacterial/plant glucose-1-phosphate adenylyltransferase family.</text>
</comment>
<gene>
    <name evidence="1" type="primary">glgC</name>
    <name type="ordered locus">Ava_2020</name>
</gene>
<name>GLGC_TRIV2</name>
<accession>Q3MBJ4</accession>
<organism>
    <name type="scientific">Trichormus variabilis (strain ATCC 29413 / PCC 7937)</name>
    <name type="common">Anabaena variabilis</name>
    <dbReference type="NCBI Taxonomy" id="240292"/>
    <lineage>
        <taxon>Bacteria</taxon>
        <taxon>Bacillati</taxon>
        <taxon>Cyanobacteriota</taxon>
        <taxon>Cyanophyceae</taxon>
        <taxon>Nostocales</taxon>
        <taxon>Nostocaceae</taxon>
        <taxon>Trichormus</taxon>
    </lineage>
</organism>
<sequence>MKKVLAIILGGGAGTRLYPLTKLRAKPAVPVAGKYRLIDIPVSNCINSEIFKIYVLTQFNSASLNRHIARTYNFSGFSEGFVEVLAAQQTPENPNWFQGTADAVRQYLWMLQEWDVDEFLILSGDHLYRMDYRLFIQRHRETNADITLSVIPIDDRRASDFGLMKIDNSGRVIDFSEKPKGEALTKMRVDTTVLGLTPEQAASQPYIASMGIYVFKKDVLIKLLKESLERTDFGKEIIPDASKDHNVQAYLFDDYWEDIGTIEAFYNANLALTQQPMPPFSFYDEEAPIYTRARYLPPTKLLDCHVTESIIGEGCILKNCRIQHSVLGVRSRIETGCVIEESLLMGADFYQASVERQCSIDKGDIPVGIGPDTIIRRAIIDKNARIGHDVKIINKDNVQEADRESQGFYIRSGIVVVLKNAVITDGTII</sequence>
<proteinExistence type="inferred from homology"/>
<feature type="chain" id="PRO_0000261858" description="Glucose-1-phosphate adenylyltransferase">
    <location>
        <begin position="1"/>
        <end position="429"/>
    </location>
</feature>
<feature type="binding site" evidence="1">
    <location>
        <position position="162"/>
    </location>
    <ligand>
        <name>alpha-D-glucose 1-phosphate</name>
        <dbReference type="ChEBI" id="CHEBI:58601"/>
    </ligand>
</feature>
<feature type="binding site" evidence="1">
    <location>
        <begin position="177"/>
        <end position="178"/>
    </location>
    <ligand>
        <name>alpha-D-glucose 1-phosphate</name>
        <dbReference type="ChEBI" id="CHEBI:58601"/>
    </ligand>
</feature>
<feature type="binding site" evidence="1">
    <location>
        <position position="209"/>
    </location>
    <ligand>
        <name>alpha-D-glucose 1-phosphate</name>
        <dbReference type="ChEBI" id="CHEBI:58601"/>
    </ligand>
</feature>
<dbReference type="EC" id="2.7.7.27" evidence="1"/>
<dbReference type="EMBL" id="CP000117">
    <property type="protein sequence ID" value="ABA21642.1"/>
    <property type="molecule type" value="Genomic_DNA"/>
</dbReference>
<dbReference type="SMR" id="Q3MBJ4"/>
<dbReference type="STRING" id="240292.Ava_2020"/>
<dbReference type="KEGG" id="ava:Ava_2020"/>
<dbReference type="eggNOG" id="COG0448">
    <property type="taxonomic scope" value="Bacteria"/>
</dbReference>
<dbReference type="HOGENOM" id="CLU_029499_14_4_3"/>
<dbReference type="UniPathway" id="UPA00164"/>
<dbReference type="Proteomes" id="UP000002533">
    <property type="component" value="Chromosome"/>
</dbReference>
<dbReference type="GO" id="GO:0031470">
    <property type="term" value="C:carboxysome"/>
    <property type="evidence" value="ECO:0007669"/>
    <property type="project" value="UniProtKB-ARBA"/>
</dbReference>
<dbReference type="GO" id="GO:0005524">
    <property type="term" value="F:ATP binding"/>
    <property type="evidence" value="ECO:0007669"/>
    <property type="project" value="UniProtKB-KW"/>
</dbReference>
<dbReference type="GO" id="GO:0008878">
    <property type="term" value="F:glucose-1-phosphate adenylyltransferase activity"/>
    <property type="evidence" value="ECO:0007669"/>
    <property type="project" value="UniProtKB-UniRule"/>
</dbReference>
<dbReference type="GO" id="GO:0043886">
    <property type="term" value="F:structural constituent of carboxysome shell"/>
    <property type="evidence" value="ECO:0007669"/>
    <property type="project" value="UniProtKB-ARBA"/>
</dbReference>
<dbReference type="GO" id="GO:0005978">
    <property type="term" value="P:glycogen biosynthetic process"/>
    <property type="evidence" value="ECO:0007669"/>
    <property type="project" value="UniProtKB-UniRule"/>
</dbReference>
<dbReference type="CDD" id="cd02508">
    <property type="entry name" value="ADP_Glucose_PP"/>
    <property type="match status" value="1"/>
</dbReference>
<dbReference type="CDD" id="cd04651">
    <property type="entry name" value="LbH_G1P_AT_C"/>
    <property type="match status" value="1"/>
</dbReference>
<dbReference type="FunFam" id="3.90.550.10:FF:000030">
    <property type="entry name" value="Glucose-1-phosphate adenylyltransferase"/>
    <property type="match status" value="1"/>
</dbReference>
<dbReference type="Gene3D" id="2.160.10.10">
    <property type="entry name" value="Hexapeptide repeat proteins"/>
    <property type="match status" value="1"/>
</dbReference>
<dbReference type="Gene3D" id="3.90.550.10">
    <property type="entry name" value="Spore Coat Polysaccharide Biosynthesis Protein SpsA, Chain A"/>
    <property type="match status" value="1"/>
</dbReference>
<dbReference type="HAMAP" id="MF_00624">
    <property type="entry name" value="GlgC"/>
    <property type="match status" value="1"/>
</dbReference>
<dbReference type="InterPro" id="IPR011831">
    <property type="entry name" value="ADP-Glc_PPase"/>
</dbReference>
<dbReference type="InterPro" id="IPR005836">
    <property type="entry name" value="ADP_Glu_pyroP_CS"/>
</dbReference>
<dbReference type="InterPro" id="IPR023049">
    <property type="entry name" value="GlgC_bac"/>
</dbReference>
<dbReference type="InterPro" id="IPR005835">
    <property type="entry name" value="NTP_transferase_dom"/>
</dbReference>
<dbReference type="InterPro" id="IPR029044">
    <property type="entry name" value="Nucleotide-diphossugar_trans"/>
</dbReference>
<dbReference type="InterPro" id="IPR011004">
    <property type="entry name" value="Trimer_LpxA-like_sf"/>
</dbReference>
<dbReference type="NCBIfam" id="TIGR02091">
    <property type="entry name" value="glgC"/>
    <property type="match status" value="1"/>
</dbReference>
<dbReference type="NCBIfam" id="NF002772">
    <property type="entry name" value="PRK02862.1"/>
    <property type="match status" value="1"/>
</dbReference>
<dbReference type="PANTHER" id="PTHR43523:SF12">
    <property type="entry name" value="GLUCOSE-1-PHOSPHATE ADENYLYLTRANSFERASE LARGE SUBUNIT 1, CHLOROPLASTIC-RELATED"/>
    <property type="match status" value="1"/>
</dbReference>
<dbReference type="PANTHER" id="PTHR43523">
    <property type="entry name" value="GLUCOSE-1-PHOSPHATE ADENYLYLTRANSFERASE-RELATED"/>
    <property type="match status" value="1"/>
</dbReference>
<dbReference type="Pfam" id="PF25247">
    <property type="entry name" value="LbH_GLGC"/>
    <property type="match status" value="1"/>
</dbReference>
<dbReference type="Pfam" id="PF00483">
    <property type="entry name" value="NTP_transferase"/>
    <property type="match status" value="1"/>
</dbReference>
<dbReference type="SUPFAM" id="SSF53448">
    <property type="entry name" value="Nucleotide-diphospho-sugar transferases"/>
    <property type="match status" value="1"/>
</dbReference>
<dbReference type="SUPFAM" id="SSF51161">
    <property type="entry name" value="Trimeric LpxA-like enzymes"/>
    <property type="match status" value="1"/>
</dbReference>
<dbReference type="PROSITE" id="PS00808">
    <property type="entry name" value="ADP_GLC_PYROPHOSPH_1"/>
    <property type="match status" value="1"/>
</dbReference>
<dbReference type="PROSITE" id="PS00809">
    <property type="entry name" value="ADP_GLC_PYROPHOSPH_2"/>
    <property type="match status" value="1"/>
</dbReference>
<dbReference type="PROSITE" id="PS00810">
    <property type="entry name" value="ADP_GLC_PYROPHOSPH_3"/>
    <property type="match status" value="1"/>
</dbReference>
<reference key="1">
    <citation type="journal article" date="2014" name="Stand. Genomic Sci.">
        <title>Complete genome sequence of Anabaena variabilis ATCC 29413.</title>
        <authorList>
            <person name="Thiel T."/>
            <person name="Pratte B.S."/>
            <person name="Zhong J."/>
            <person name="Goodwin L."/>
            <person name="Copeland A."/>
            <person name="Lucas S."/>
            <person name="Han C."/>
            <person name="Pitluck S."/>
            <person name="Land M.L."/>
            <person name="Kyrpides N.C."/>
            <person name="Woyke T."/>
        </authorList>
    </citation>
    <scope>NUCLEOTIDE SEQUENCE [LARGE SCALE GENOMIC DNA]</scope>
    <source>
        <strain>ATCC 29413 / PCC 7937</strain>
    </source>
</reference>